<evidence type="ECO:0000250" key="1"/>
<evidence type="ECO:0000255" key="2"/>
<evidence type="ECO:0000305" key="3"/>
<comment type="function">
    <text evidence="1">NDH-1 shuttles electrons from NADH, via FMN and iron-sulfur (Fe-S) centers, to quinones in the respiratory chain. Couples the redox reaction to proton translocation (for every two electrons transferred, four hydrogen ions are translocated across the cytoplasmic membrane), and thus conserves the redox energy in a proton gradient (By similarity).</text>
</comment>
<comment type="catalytic activity">
    <reaction>
        <text>a quinone + NADH + 5 H(+)(in) = a quinol + NAD(+) + 4 H(+)(out)</text>
        <dbReference type="Rhea" id="RHEA:57888"/>
        <dbReference type="ChEBI" id="CHEBI:15378"/>
        <dbReference type="ChEBI" id="CHEBI:24646"/>
        <dbReference type="ChEBI" id="CHEBI:57540"/>
        <dbReference type="ChEBI" id="CHEBI:57945"/>
        <dbReference type="ChEBI" id="CHEBI:132124"/>
    </reaction>
</comment>
<comment type="subcellular location">
    <subcellularLocation>
        <location>Cell membrane</location>
        <topology>Multi-pass membrane protein</topology>
    </subcellularLocation>
</comment>
<comment type="similarity">
    <text evidence="3">Belongs to the complex I subunit 6 family.</text>
</comment>
<protein>
    <recommendedName>
        <fullName>NADH-quinone oxidoreductase subunit J</fullName>
        <ecNumber>7.1.1.-</ecNumber>
    </recommendedName>
    <alternativeName>
        <fullName>NADH dehydrogenase I subunit J</fullName>
    </alternativeName>
    <alternativeName>
        <fullName>NDH-1 subunit J</fullName>
    </alternativeName>
</protein>
<dbReference type="EC" id="7.1.1.-"/>
<dbReference type="EMBL" id="AE006914">
    <property type="protein sequence ID" value="AAL03762.1"/>
    <property type="molecule type" value="Genomic_DNA"/>
</dbReference>
<dbReference type="PIR" id="H97852">
    <property type="entry name" value="H97852"/>
</dbReference>
<dbReference type="RefSeq" id="WP_010977789.1">
    <property type="nucleotide sequence ID" value="NC_003103.1"/>
</dbReference>
<dbReference type="SMR" id="Q92G99"/>
<dbReference type="GeneID" id="928377"/>
<dbReference type="KEGG" id="rco:RC1224"/>
<dbReference type="HOGENOM" id="CLU_085957_5_1_5"/>
<dbReference type="Proteomes" id="UP000000816">
    <property type="component" value="Chromosome"/>
</dbReference>
<dbReference type="GO" id="GO:0005886">
    <property type="term" value="C:plasma membrane"/>
    <property type="evidence" value="ECO:0007669"/>
    <property type="project" value="UniProtKB-SubCell"/>
</dbReference>
<dbReference type="GO" id="GO:0008137">
    <property type="term" value="F:NADH dehydrogenase (ubiquinone) activity"/>
    <property type="evidence" value="ECO:0007669"/>
    <property type="project" value="InterPro"/>
</dbReference>
<dbReference type="GO" id="GO:0048038">
    <property type="term" value="F:quinone binding"/>
    <property type="evidence" value="ECO:0007669"/>
    <property type="project" value="UniProtKB-KW"/>
</dbReference>
<dbReference type="Gene3D" id="1.20.120.1200">
    <property type="entry name" value="NADH-ubiquinone/plastoquinone oxidoreductase chain 6, subunit NuoJ"/>
    <property type="match status" value="1"/>
</dbReference>
<dbReference type="InterPro" id="IPR001457">
    <property type="entry name" value="NADH_UbQ/plastoQ_OxRdtase_su6"/>
</dbReference>
<dbReference type="InterPro" id="IPR042106">
    <property type="entry name" value="Nuo/plastoQ_OxRdtase_6_NuoJ"/>
</dbReference>
<dbReference type="NCBIfam" id="NF005164">
    <property type="entry name" value="PRK06638.1-4"/>
    <property type="match status" value="1"/>
</dbReference>
<dbReference type="PANTHER" id="PTHR33269">
    <property type="entry name" value="NADH-UBIQUINONE OXIDOREDUCTASE CHAIN 6"/>
    <property type="match status" value="1"/>
</dbReference>
<dbReference type="PANTHER" id="PTHR33269:SF17">
    <property type="entry name" value="NADH-UBIQUINONE OXIDOREDUCTASE CHAIN 6"/>
    <property type="match status" value="1"/>
</dbReference>
<dbReference type="Pfam" id="PF00499">
    <property type="entry name" value="Oxidored_q3"/>
    <property type="match status" value="1"/>
</dbReference>
<name>NUOJ_RICCN</name>
<feature type="chain" id="PRO_0000118378" description="NADH-quinone oxidoreductase subunit J">
    <location>
        <begin position="1"/>
        <end position="205"/>
    </location>
</feature>
<feature type="transmembrane region" description="Helical" evidence="2">
    <location>
        <begin position="1"/>
        <end position="21"/>
    </location>
</feature>
<feature type="transmembrane region" description="Helical" evidence="2">
    <location>
        <begin position="26"/>
        <end position="46"/>
    </location>
</feature>
<feature type="transmembrane region" description="Helical" evidence="2">
    <location>
        <begin position="54"/>
        <end position="74"/>
    </location>
</feature>
<feature type="transmembrane region" description="Helical" evidence="2">
    <location>
        <begin position="89"/>
        <end position="109"/>
    </location>
</feature>
<feature type="transmembrane region" description="Helical" evidence="2">
    <location>
        <begin position="142"/>
        <end position="162"/>
    </location>
</feature>
<keyword id="KW-1003">Cell membrane</keyword>
<keyword id="KW-0472">Membrane</keyword>
<keyword id="KW-0520">NAD</keyword>
<keyword id="KW-0874">Quinone</keyword>
<keyword id="KW-1278">Translocase</keyword>
<keyword id="KW-0812">Transmembrane</keyword>
<keyword id="KW-1133">Transmembrane helix</keyword>
<organism>
    <name type="scientific">Rickettsia conorii (strain ATCC VR-613 / Malish 7)</name>
    <dbReference type="NCBI Taxonomy" id="272944"/>
    <lineage>
        <taxon>Bacteria</taxon>
        <taxon>Pseudomonadati</taxon>
        <taxon>Pseudomonadota</taxon>
        <taxon>Alphaproteobacteria</taxon>
        <taxon>Rickettsiales</taxon>
        <taxon>Rickettsiaceae</taxon>
        <taxon>Rickettsieae</taxon>
        <taxon>Rickettsia</taxon>
        <taxon>spotted fever group</taxon>
    </lineage>
</organism>
<reference key="1">
    <citation type="journal article" date="2001" name="Science">
        <title>Mechanisms of evolution in Rickettsia conorii and R. prowazekii.</title>
        <authorList>
            <person name="Ogata H."/>
            <person name="Audic S."/>
            <person name="Renesto-Audiffren P."/>
            <person name="Fournier P.-E."/>
            <person name="Barbe V."/>
            <person name="Samson D."/>
            <person name="Roux V."/>
            <person name="Cossart P."/>
            <person name="Weissenbach J."/>
            <person name="Claverie J.-M."/>
            <person name="Raoult D."/>
        </authorList>
    </citation>
    <scope>NUCLEOTIDE SEQUENCE [LARGE SCALE GENOMIC DNA]</scope>
    <source>
        <strain>ATCC VR-613 / Malish 7</strain>
    </source>
</reference>
<sequence length="205" mass="22917">MPIFFYLFATLITISSVCVVLSKNSVYSVLWLIFAFINGAGLMILLGAEFLAMMLIVIYVGAVAVLFLFVIMMLDMHFNKTITQLKANLALSIFIALIMFADLVIIILLGTKNINFNSNVSFTITNNISNTKAIGGVLYTDFMLPFQMAGLILFVAMIACITLTLKKREGVKRQDISKQLRHNKENTVLMTKPILNKGVENIKYE</sequence>
<gene>
    <name type="primary">nuoJ</name>
    <name type="ordered locus">RC1224</name>
</gene>
<accession>Q92G99</accession>
<proteinExistence type="inferred from homology"/>